<evidence type="ECO:0000250" key="1"/>
<evidence type="ECO:0000256" key="2">
    <source>
        <dbReference type="SAM" id="MobiDB-lite"/>
    </source>
</evidence>
<evidence type="ECO:0000305" key="3"/>
<name>U518_DROPS</name>
<reference key="1">
    <citation type="journal article" date="2005" name="Genome Res.">
        <title>Comparative genome sequencing of Drosophila pseudoobscura: chromosomal, gene, and cis-element evolution.</title>
        <authorList>
            <person name="Richards S."/>
            <person name="Liu Y."/>
            <person name="Bettencourt B.R."/>
            <person name="Hradecky P."/>
            <person name="Letovsky S."/>
            <person name="Nielsen R."/>
            <person name="Thornton K."/>
            <person name="Hubisz M.J."/>
            <person name="Chen R."/>
            <person name="Meisel R.P."/>
            <person name="Couronne O."/>
            <person name="Hua S."/>
            <person name="Smith M.A."/>
            <person name="Zhang P."/>
            <person name="Liu J."/>
            <person name="Bussemaker H.J."/>
            <person name="van Batenburg M.F."/>
            <person name="Howells S.L."/>
            <person name="Scherer S.E."/>
            <person name="Sodergren E."/>
            <person name="Matthews B.B."/>
            <person name="Crosby M.A."/>
            <person name="Schroeder A.J."/>
            <person name="Ortiz-Barrientos D."/>
            <person name="Rives C.M."/>
            <person name="Metzker M.L."/>
            <person name="Muzny D.M."/>
            <person name="Scott G."/>
            <person name="Steffen D."/>
            <person name="Wheeler D.A."/>
            <person name="Worley K.C."/>
            <person name="Havlak P."/>
            <person name="Durbin K.J."/>
            <person name="Egan A."/>
            <person name="Gill R."/>
            <person name="Hume J."/>
            <person name="Morgan M.B."/>
            <person name="Miner G."/>
            <person name="Hamilton C."/>
            <person name="Huang Y."/>
            <person name="Waldron L."/>
            <person name="Verduzco D."/>
            <person name="Clerc-Blankenburg K.P."/>
            <person name="Dubchak I."/>
            <person name="Noor M.A.F."/>
            <person name="Anderson W."/>
            <person name="White K.P."/>
            <person name="Clark A.G."/>
            <person name="Schaeffer S.W."/>
            <person name="Gelbart W.M."/>
            <person name="Weinstock G.M."/>
            <person name="Gibbs R.A."/>
        </authorList>
    </citation>
    <scope>NUCLEOTIDE SEQUENCE [LARGE SCALE GENOMIC DNA]</scope>
    <source>
        <strain>MV2-25 / Tucson 14011-0121.94</strain>
    </source>
</reference>
<accession>B5DI68</accession>
<organism>
    <name type="scientific">Drosophila pseudoobscura pseudoobscura</name>
    <name type="common">Fruit fly</name>
    <dbReference type="NCBI Taxonomy" id="46245"/>
    <lineage>
        <taxon>Eukaryota</taxon>
        <taxon>Metazoa</taxon>
        <taxon>Ecdysozoa</taxon>
        <taxon>Arthropoda</taxon>
        <taxon>Hexapoda</taxon>
        <taxon>Insecta</taxon>
        <taxon>Pterygota</taxon>
        <taxon>Neoptera</taxon>
        <taxon>Endopterygota</taxon>
        <taxon>Diptera</taxon>
        <taxon>Brachycera</taxon>
        <taxon>Muscomorpha</taxon>
        <taxon>Ephydroidea</taxon>
        <taxon>Drosophilidae</taxon>
        <taxon>Drosophila</taxon>
        <taxon>Sophophora</taxon>
    </lineage>
</organism>
<comment type="similarity">
    <text evidence="3">Belongs to the FHIP family.</text>
</comment>
<proteinExistence type="inferred from homology"/>
<protein>
    <recommendedName>
        <fullName>FHIP family protein GA25918</fullName>
    </recommendedName>
</protein>
<feature type="chain" id="PRO_0000379012" description="FHIP family protein GA25918">
    <location>
        <begin position="1"/>
        <end position="1081"/>
    </location>
</feature>
<feature type="region of interest" description="Disordered" evidence="2">
    <location>
        <begin position="1"/>
        <end position="31"/>
    </location>
</feature>
<feature type="region of interest" description="Disordered" evidence="2">
    <location>
        <begin position="504"/>
        <end position="524"/>
    </location>
</feature>
<feature type="region of interest" description="Disordered" evidence="2">
    <location>
        <begin position="650"/>
        <end position="685"/>
    </location>
</feature>
<feature type="region of interest" description="Disordered" evidence="2">
    <location>
        <begin position="830"/>
        <end position="913"/>
    </location>
</feature>
<feature type="region of interest" description="Disordered" evidence="2">
    <location>
        <begin position="933"/>
        <end position="1027"/>
    </location>
</feature>
<feature type="compositionally biased region" description="Polar residues" evidence="2">
    <location>
        <begin position="1"/>
        <end position="11"/>
    </location>
</feature>
<feature type="compositionally biased region" description="Low complexity" evidence="2">
    <location>
        <begin position="657"/>
        <end position="668"/>
    </location>
</feature>
<feature type="compositionally biased region" description="Low complexity" evidence="2">
    <location>
        <begin position="840"/>
        <end position="856"/>
    </location>
</feature>
<feature type="compositionally biased region" description="Polar residues" evidence="2">
    <location>
        <begin position="857"/>
        <end position="876"/>
    </location>
</feature>
<feature type="compositionally biased region" description="Low complexity" evidence="2">
    <location>
        <begin position="891"/>
        <end position="913"/>
    </location>
</feature>
<feature type="compositionally biased region" description="Low complexity" evidence="2">
    <location>
        <begin position="933"/>
        <end position="953"/>
    </location>
</feature>
<feature type="compositionally biased region" description="Polar residues" evidence="2">
    <location>
        <begin position="954"/>
        <end position="963"/>
    </location>
</feature>
<feature type="compositionally biased region" description="Low complexity" evidence="2">
    <location>
        <begin position="964"/>
        <end position="993"/>
    </location>
</feature>
<feature type="compositionally biased region" description="Polar residues" evidence="2">
    <location>
        <begin position="994"/>
        <end position="1010"/>
    </location>
</feature>
<feature type="modified residue" description="Phosphoserine" evidence="1">
    <location>
        <position position="508"/>
    </location>
</feature>
<feature type="modified residue" description="Phosphoserine" evidence="1">
    <location>
        <position position="833"/>
    </location>
</feature>
<sequence length="1081" mass="118337">MSWLRSSPLRQSGNGGGGGVSTGHSSTGSLRQRPIDAATDCDPRACYDSFCKHWQQAYDIIQHYAPPTHDDVLGVVSHLDYMVTLLLVELHHCNKVSLPSTDASAAPAAPCLEYLLSENLLDKLYEWACTTGRYANAVRLEQLKLYELLVSHSRHQLLCHEPFLRPLLKILASSQGEIFPPDLEKRLVILLNQLCVVLMQNVHLLDLFFFSAQTQVQEQIQNGNVPPPKSGTTTNFIIFSLLIPYVHREGSLGHQARDALLLCMALSQKNSNIGTYIAQYSSICPLLVTGLGGLYSRLPNSIEISSIDWHRITPDDVTEIPELTLFMNALEFCNAVVQVAHEMIKQQLLDFMYQGFIVPVLGPAVLQTLKGKHFQTNIDSQISAMSYLDLILRSITEPGLLRAFVKFLLDTEKFDGERILDSLVERLNSPDANLCMVTMALFDTLLGLHCEDLMLELLLKFMLPGKHVPISHRHKINKIDPYLNSSDFFLELSPDVLKRARDLARPKSVHEQQAPSGATGEQPIQPLAWPSLPSPVMSKTIGANWNYYGLHTGDSLYANLQAYLFEAHWRIAQCQRDCLKWANSYRYQKWPRHGQARVHAHALELARQFFSEFGGGPPAIASESAGEKQLDSLQSIGESSGYESFKWRPADEESDATDLTVTTTTASEADLEHNSSSVSSGMGGGGGAAAGRRGEVWRISHTNRNELLLTDLDFSEDLFAQGTVSLGPFLNAIWGKLQTFTSNSLYVNLHLTGLITRLAWYPLPLIHSLLLRSDIAITSDTPSFHQVLRILKQQIDAELPVTEDSLEIIDVARSSLIDREFRLVNARKGNENSPLHHHQQPQTTLSQQQQQQQGQQRSAYATLSAATPVQATQTSAYDPFKRSDNKRKSISKSISSMFSRRSTPNPPSSAASSGLSQIYAFFTGAASTLVGNNNNNSGSGGQSQPFSSTGTGTCETSLSTNPQSGAAAARSTGTATTANGNSSNSNISIGGSTQTLSGHSNTTTYSSSTLHGLDGGPQTGSFNSEPASLDSVASMGIIASTSGTERTRDVALCAVLLDEWLKELAAIAQEQSVVLVTDQLL</sequence>
<dbReference type="EMBL" id="CH379060">
    <property type="protein sequence ID" value="EDY70008.1"/>
    <property type="molecule type" value="Genomic_DNA"/>
</dbReference>
<dbReference type="RefSeq" id="XP_002132606.1">
    <property type="nucleotide sequence ID" value="XM_002132570.2"/>
</dbReference>
<dbReference type="SMR" id="B5DI68"/>
<dbReference type="FunCoup" id="B5DI68">
    <property type="interactions" value="70"/>
</dbReference>
<dbReference type="STRING" id="46245.B5DI68"/>
<dbReference type="EnsemblMetazoa" id="FBtr0282010">
    <property type="protein sequence ID" value="FBpp0280448"/>
    <property type="gene ID" value="FBgn0247295"/>
</dbReference>
<dbReference type="eggNOG" id="KOG3695">
    <property type="taxonomic scope" value="Eukaryota"/>
</dbReference>
<dbReference type="HOGENOM" id="CLU_007807_0_0_1"/>
<dbReference type="InParanoid" id="B5DI68"/>
<dbReference type="OMA" id="RMPSLVQ"/>
<dbReference type="Proteomes" id="UP000001819">
    <property type="component" value="Unplaced"/>
</dbReference>
<dbReference type="Bgee" id="FBgn0247295">
    <property type="expression patterns" value="Expressed in insect adult head and 2 other cell types or tissues"/>
</dbReference>
<dbReference type="ExpressionAtlas" id="B5DI68">
    <property type="expression patterns" value="baseline"/>
</dbReference>
<dbReference type="InterPro" id="IPR019384">
    <property type="entry name" value="FHIP"/>
</dbReference>
<dbReference type="InterPro" id="IPR045669">
    <property type="entry name" value="FHIP_C"/>
</dbReference>
<dbReference type="InterPro" id="IPR045668">
    <property type="entry name" value="FHIP_KELAA_motif"/>
</dbReference>
<dbReference type="PANTHER" id="PTHR21705:SF11">
    <property type="entry name" value="FHIP FAMILY PROTEIN CG3558"/>
    <property type="match status" value="1"/>
</dbReference>
<dbReference type="PANTHER" id="PTHR21705">
    <property type="entry name" value="RAI16 PROTEIN-RELATED"/>
    <property type="match status" value="1"/>
</dbReference>
<dbReference type="Pfam" id="PF19314">
    <property type="entry name" value="DUF5917"/>
    <property type="match status" value="1"/>
</dbReference>
<dbReference type="Pfam" id="PF19311">
    <property type="entry name" value="KELAA"/>
    <property type="match status" value="1"/>
</dbReference>
<dbReference type="Pfam" id="PF10257">
    <property type="entry name" value="RAI16-like"/>
    <property type="match status" value="1"/>
</dbReference>
<keyword id="KW-0597">Phosphoprotein</keyword>
<keyword id="KW-1185">Reference proteome</keyword>
<gene>
    <name type="ORF">GA25918</name>
</gene>